<feature type="chain" id="PRO_0000330506" description="Siroheme synthase 2">
    <location>
        <begin position="1"/>
        <end position="459"/>
    </location>
</feature>
<feature type="region of interest" description="Precorrin-2 dehydrogenase /sirohydrochlorin ferrochelatase" evidence="1">
    <location>
        <begin position="1"/>
        <end position="204"/>
    </location>
</feature>
<feature type="region of interest" description="Uroporphyrinogen-III C-methyltransferase" evidence="1">
    <location>
        <begin position="216"/>
        <end position="459"/>
    </location>
</feature>
<feature type="active site" description="Proton acceptor" evidence="1">
    <location>
        <position position="248"/>
    </location>
</feature>
<feature type="active site" description="Proton donor" evidence="1">
    <location>
        <position position="270"/>
    </location>
</feature>
<feature type="binding site" evidence="1">
    <location>
        <begin position="22"/>
        <end position="23"/>
    </location>
    <ligand>
        <name>NAD(+)</name>
        <dbReference type="ChEBI" id="CHEBI:57540"/>
    </ligand>
</feature>
<feature type="binding site" evidence="1">
    <location>
        <begin position="43"/>
        <end position="44"/>
    </location>
    <ligand>
        <name>NAD(+)</name>
        <dbReference type="ChEBI" id="CHEBI:57540"/>
    </ligand>
</feature>
<feature type="binding site" evidence="1">
    <location>
        <position position="225"/>
    </location>
    <ligand>
        <name>S-adenosyl-L-methionine</name>
        <dbReference type="ChEBI" id="CHEBI:59789"/>
    </ligand>
</feature>
<feature type="binding site" evidence="1">
    <location>
        <begin position="301"/>
        <end position="303"/>
    </location>
    <ligand>
        <name>S-adenosyl-L-methionine</name>
        <dbReference type="ChEBI" id="CHEBI:59789"/>
    </ligand>
</feature>
<feature type="binding site" evidence="1">
    <location>
        <position position="306"/>
    </location>
    <ligand>
        <name>S-adenosyl-L-methionine</name>
        <dbReference type="ChEBI" id="CHEBI:59789"/>
    </ligand>
</feature>
<feature type="binding site" evidence="1">
    <location>
        <begin position="331"/>
        <end position="332"/>
    </location>
    <ligand>
        <name>S-adenosyl-L-methionine</name>
        <dbReference type="ChEBI" id="CHEBI:59789"/>
    </ligand>
</feature>
<feature type="binding site" evidence="1">
    <location>
        <position position="382"/>
    </location>
    <ligand>
        <name>S-adenosyl-L-methionine</name>
        <dbReference type="ChEBI" id="CHEBI:59789"/>
    </ligand>
</feature>
<feature type="binding site" evidence="1">
    <location>
        <position position="411"/>
    </location>
    <ligand>
        <name>S-adenosyl-L-methionine</name>
        <dbReference type="ChEBI" id="CHEBI:59789"/>
    </ligand>
</feature>
<feature type="modified residue" description="Phosphoserine" evidence="1">
    <location>
        <position position="128"/>
    </location>
</feature>
<sequence>MDYLPIFCQLHDKPCLLVGGGEIAERKARLLLDAGAVITVNALDFNDQFRAWEKDAQLTLVHSTFDPALLNEVWLVIAATDNQDVNNHVYASASERRIFCNVVDSPERASFIMPSIIDRSPLMVAVSSGGTAPVLARLLREKLESILPQNLGKLAAFAGELRSRVKIRFCKMSARRRFWEKLFVHDRLAQALASEDRERVQQLTELLFSAPLDDRGEVTLVGAGPGDAGLLTLKGLQHLQQADIVVYDRLVSKEILNLSRRDAERIFVGKASGYHSVPQDQINQLLEEKARAGHRVVRLKGGDPFIFGRGAEELEYLQQAGVPFSVVPGITAASGCSAYSGIPLTHRDHSQGVRLITGHVKHDTDLDWSSLAAEKQTLVFYMGLQQAEHIQNKLIEQQLPETVPVAIIENGTSTKQRVLSGQLSQLGELAQQASSPSLIIIGNVVGLREKLSWFSDQTA</sequence>
<accession>Q6CZS0</accession>
<proteinExistence type="inferred from homology"/>
<organism>
    <name type="scientific">Pectobacterium atrosepticum (strain SCRI 1043 / ATCC BAA-672)</name>
    <name type="common">Erwinia carotovora subsp. atroseptica</name>
    <dbReference type="NCBI Taxonomy" id="218491"/>
    <lineage>
        <taxon>Bacteria</taxon>
        <taxon>Pseudomonadati</taxon>
        <taxon>Pseudomonadota</taxon>
        <taxon>Gammaproteobacteria</taxon>
        <taxon>Enterobacterales</taxon>
        <taxon>Pectobacteriaceae</taxon>
        <taxon>Pectobacterium</taxon>
    </lineage>
</organism>
<comment type="function">
    <text evidence="1">Multifunctional enzyme that catalyzes the SAM-dependent methylations of uroporphyrinogen III at position C-2 and C-7 to form precorrin-2 via precorrin-1. Then it catalyzes the NAD-dependent ring dehydrogenation of precorrin-2 to yield sirohydrochlorin. Finally, it catalyzes the ferrochelation of sirohydrochlorin to yield siroheme.</text>
</comment>
<comment type="catalytic activity">
    <reaction evidence="1">
        <text>uroporphyrinogen III + 2 S-adenosyl-L-methionine = precorrin-2 + 2 S-adenosyl-L-homocysteine + H(+)</text>
        <dbReference type="Rhea" id="RHEA:32459"/>
        <dbReference type="ChEBI" id="CHEBI:15378"/>
        <dbReference type="ChEBI" id="CHEBI:57308"/>
        <dbReference type="ChEBI" id="CHEBI:57856"/>
        <dbReference type="ChEBI" id="CHEBI:58827"/>
        <dbReference type="ChEBI" id="CHEBI:59789"/>
        <dbReference type="EC" id="2.1.1.107"/>
    </reaction>
</comment>
<comment type="catalytic activity">
    <reaction evidence="1">
        <text>precorrin-2 + NAD(+) = sirohydrochlorin + NADH + 2 H(+)</text>
        <dbReference type="Rhea" id="RHEA:15613"/>
        <dbReference type="ChEBI" id="CHEBI:15378"/>
        <dbReference type="ChEBI" id="CHEBI:57540"/>
        <dbReference type="ChEBI" id="CHEBI:57945"/>
        <dbReference type="ChEBI" id="CHEBI:58351"/>
        <dbReference type="ChEBI" id="CHEBI:58827"/>
        <dbReference type="EC" id="1.3.1.76"/>
    </reaction>
</comment>
<comment type="catalytic activity">
    <reaction evidence="1">
        <text>siroheme + 2 H(+) = sirohydrochlorin + Fe(2+)</text>
        <dbReference type="Rhea" id="RHEA:24360"/>
        <dbReference type="ChEBI" id="CHEBI:15378"/>
        <dbReference type="ChEBI" id="CHEBI:29033"/>
        <dbReference type="ChEBI" id="CHEBI:58351"/>
        <dbReference type="ChEBI" id="CHEBI:60052"/>
        <dbReference type="EC" id="4.99.1.4"/>
    </reaction>
</comment>
<comment type="pathway">
    <text evidence="1">Cofactor biosynthesis; adenosylcobalamin biosynthesis; precorrin-2 from uroporphyrinogen III: step 1/1.</text>
</comment>
<comment type="pathway">
    <text evidence="1">Cofactor biosynthesis; adenosylcobalamin biosynthesis; sirohydrochlorin from precorrin-2: step 1/1.</text>
</comment>
<comment type="pathway">
    <text evidence="1">Porphyrin-containing compound metabolism; siroheme biosynthesis; precorrin-2 from uroporphyrinogen III: step 1/1.</text>
</comment>
<comment type="pathway">
    <text evidence="1">Porphyrin-containing compound metabolism; siroheme biosynthesis; siroheme from sirohydrochlorin: step 1/1.</text>
</comment>
<comment type="pathway">
    <text evidence="1">Porphyrin-containing compound metabolism; siroheme biosynthesis; sirohydrochlorin from precorrin-2: step 1/1.</text>
</comment>
<comment type="similarity">
    <text evidence="1">In the N-terminal section; belongs to the precorrin-2 dehydrogenase / sirohydrochlorin ferrochelatase family.</text>
</comment>
<comment type="similarity">
    <text evidence="1">In the C-terminal section; belongs to the precorrin methyltransferase family.</text>
</comment>
<reference key="1">
    <citation type="journal article" date="2004" name="Proc. Natl. Acad. Sci. U.S.A.">
        <title>Genome sequence of the enterobacterial phytopathogen Erwinia carotovora subsp. atroseptica and characterization of virulence factors.</title>
        <authorList>
            <person name="Bell K.S."/>
            <person name="Sebaihia M."/>
            <person name="Pritchard L."/>
            <person name="Holden M.T.G."/>
            <person name="Hyman L.J."/>
            <person name="Holeva M.C."/>
            <person name="Thomson N.R."/>
            <person name="Bentley S.D."/>
            <person name="Churcher L.J.C."/>
            <person name="Mungall K."/>
            <person name="Atkin R."/>
            <person name="Bason N."/>
            <person name="Brooks K."/>
            <person name="Chillingworth T."/>
            <person name="Clark K."/>
            <person name="Doggett J."/>
            <person name="Fraser A."/>
            <person name="Hance Z."/>
            <person name="Hauser H."/>
            <person name="Jagels K."/>
            <person name="Moule S."/>
            <person name="Norbertczak H."/>
            <person name="Ormond D."/>
            <person name="Price C."/>
            <person name="Quail M.A."/>
            <person name="Sanders M."/>
            <person name="Walker D."/>
            <person name="Whitehead S."/>
            <person name="Salmond G.P.C."/>
            <person name="Birch P.R.J."/>
            <person name="Parkhill J."/>
            <person name="Toth I.K."/>
        </authorList>
    </citation>
    <scope>NUCLEOTIDE SEQUENCE [LARGE SCALE GENOMIC DNA]</scope>
    <source>
        <strain>SCRI 1043 / ATCC BAA-672</strain>
    </source>
</reference>
<keyword id="KW-0169">Cobalamin biosynthesis</keyword>
<keyword id="KW-0456">Lyase</keyword>
<keyword id="KW-0489">Methyltransferase</keyword>
<keyword id="KW-0511">Multifunctional enzyme</keyword>
<keyword id="KW-0520">NAD</keyword>
<keyword id="KW-0560">Oxidoreductase</keyword>
<keyword id="KW-0597">Phosphoprotein</keyword>
<keyword id="KW-0627">Porphyrin biosynthesis</keyword>
<keyword id="KW-1185">Reference proteome</keyword>
<keyword id="KW-0949">S-adenosyl-L-methionine</keyword>
<keyword id="KW-0808">Transferase</keyword>
<evidence type="ECO:0000255" key="1">
    <source>
        <dbReference type="HAMAP-Rule" id="MF_01646"/>
    </source>
</evidence>
<gene>
    <name evidence="1" type="primary">cysG2</name>
    <name type="ordered locus">ECA4081</name>
</gene>
<protein>
    <recommendedName>
        <fullName evidence="1">Siroheme synthase 2</fullName>
    </recommendedName>
    <domain>
        <recommendedName>
            <fullName evidence="1">Uroporphyrinogen-III C-methyltransferase 2</fullName>
            <shortName evidence="1">Urogen III methylase 2</shortName>
            <ecNumber evidence="1">2.1.1.107</ecNumber>
        </recommendedName>
        <alternativeName>
            <fullName evidence="1">SUMT 2</fullName>
        </alternativeName>
        <alternativeName>
            <fullName evidence="1">Uroporphyrinogen III methylase 2</fullName>
            <shortName evidence="1">UROM 2</shortName>
        </alternativeName>
    </domain>
    <domain>
        <recommendedName>
            <fullName evidence="1">Precorrin-2 dehydrogenase 2</fullName>
            <ecNumber evidence="1">1.3.1.76</ecNumber>
        </recommendedName>
    </domain>
    <domain>
        <recommendedName>
            <fullName evidence="1">Sirohydrochlorin ferrochelatase 2</fullName>
            <ecNumber evidence="1">4.99.1.4</ecNumber>
        </recommendedName>
    </domain>
</protein>
<name>CYSG2_PECAS</name>
<dbReference type="EC" id="2.1.1.107" evidence="1"/>
<dbReference type="EC" id="1.3.1.76" evidence="1"/>
<dbReference type="EC" id="4.99.1.4" evidence="1"/>
<dbReference type="EMBL" id="BX950851">
    <property type="protein sequence ID" value="CAG76978.1"/>
    <property type="molecule type" value="Genomic_DNA"/>
</dbReference>
<dbReference type="RefSeq" id="WP_011095555.1">
    <property type="nucleotide sequence ID" value="NC_004547.2"/>
</dbReference>
<dbReference type="SMR" id="Q6CZS0"/>
<dbReference type="STRING" id="218491.ECA4081"/>
<dbReference type="KEGG" id="eca:ECA4081"/>
<dbReference type="PATRIC" id="fig|218491.5.peg.4150"/>
<dbReference type="eggNOG" id="COG0007">
    <property type="taxonomic scope" value="Bacteria"/>
</dbReference>
<dbReference type="eggNOG" id="COG1648">
    <property type="taxonomic scope" value="Bacteria"/>
</dbReference>
<dbReference type="HOGENOM" id="CLU_011276_2_0_6"/>
<dbReference type="OrthoDB" id="9815856at2"/>
<dbReference type="UniPathway" id="UPA00148">
    <property type="reaction ID" value="UER00211"/>
</dbReference>
<dbReference type="UniPathway" id="UPA00148">
    <property type="reaction ID" value="UER00222"/>
</dbReference>
<dbReference type="UniPathway" id="UPA00262">
    <property type="reaction ID" value="UER00211"/>
</dbReference>
<dbReference type="UniPathway" id="UPA00262">
    <property type="reaction ID" value="UER00222"/>
</dbReference>
<dbReference type="UniPathway" id="UPA00262">
    <property type="reaction ID" value="UER00376"/>
</dbReference>
<dbReference type="Proteomes" id="UP000007966">
    <property type="component" value="Chromosome"/>
</dbReference>
<dbReference type="GO" id="GO:0051287">
    <property type="term" value="F:NAD binding"/>
    <property type="evidence" value="ECO:0007669"/>
    <property type="project" value="InterPro"/>
</dbReference>
<dbReference type="GO" id="GO:0043115">
    <property type="term" value="F:precorrin-2 dehydrogenase activity"/>
    <property type="evidence" value="ECO:0007669"/>
    <property type="project" value="UniProtKB-UniRule"/>
</dbReference>
<dbReference type="GO" id="GO:0051266">
    <property type="term" value="F:sirohydrochlorin ferrochelatase activity"/>
    <property type="evidence" value="ECO:0007669"/>
    <property type="project" value="UniProtKB-EC"/>
</dbReference>
<dbReference type="GO" id="GO:0004851">
    <property type="term" value="F:uroporphyrin-III C-methyltransferase activity"/>
    <property type="evidence" value="ECO:0007669"/>
    <property type="project" value="UniProtKB-UniRule"/>
</dbReference>
<dbReference type="GO" id="GO:0009236">
    <property type="term" value="P:cobalamin biosynthetic process"/>
    <property type="evidence" value="ECO:0007669"/>
    <property type="project" value="UniProtKB-UniRule"/>
</dbReference>
<dbReference type="GO" id="GO:0032259">
    <property type="term" value="P:methylation"/>
    <property type="evidence" value="ECO:0007669"/>
    <property type="project" value="UniProtKB-KW"/>
</dbReference>
<dbReference type="GO" id="GO:0019354">
    <property type="term" value="P:siroheme biosynthetic process"/>
    <property type="evidence" value="ECO:0007669"/>
    <property type="project" value="UniProtKB-UniRule"/>
</dbReference>
<dbReference type="CDD" id="cd11642">
    <property type="entry name" value="SUMT"/>
    <property type="match status" value="1"/>
</dbReference>
<dbReference type="FunFam" id="3.30.160.110:FF:000001">
    <property type="entry name" value="Siroheme synthase"/>
    <property type="match status" value="1"/>
</dbReference>
<dbReference type="FunFam" id="3.30.950.10:FF:000001">
    <property type="entry name" value="Siroheme synthase"/>
    <property type="match status" value="1"/>
</dbReference>
<dbReference type="FunFam" id="3.40.1010.10:FF:000001">
    <property type="entry name" value="Siroheme synthase"/>
    <property type="match status" value="1"/>
</dbReference>
<dbReference type="Gene3D" id="3.40.1010.10">
    <property type="entry name" value="Cobalt-precorrin-4 Transmethylase, Domain 1"/>
    <property type="match status" value="1"/>
</dbReference>
<dbReference type="Gene3D" id="3.30.950.10">
    <property type="entry name" value="Methyltransferase, Cobalt-precorrin-4 Transmethylase, Domain 2"/>
    <property type="match status" value="1"/>
</dbReference>
<dbReference type="Gene3D" id="3.40.50.720">
    <property type="entry name" value="NAD(P)-binding Rossmann-like Domain"/>
    <property type="match status" value="1"/>
</dbReference>
<dbReference type="Gene3D" id="1.10.8.210">
    <property type="entry name" value="Sirohaem synthase, dimerisation domain"/>
    <property type="match status" value="1"/>
</dbReference>
<dbReference type="Gene3D" id="3.30.160.110">
    <property type="entry name" value="Siroheme synthase, domain 2"/>
    <property type="match status" value="1"/>
</dbReference>
<dbReference type="HAMAP" id="MF_01646">
    <property type="entry name" value="Siroheme_synth"/>
    <property type="match status" value="1"/>
</dbReference>
<dbReference type="InterPro" id="IPR000878">
    <property type="entry name" value="4pyrrol_Mease"/>
</dbReference>
<dbReference type="InterPro" id="IPR035996">
    <property type="entry name" value="4pyrrol_Methylase_sf"/>
</dbReference>
<dbReference type="InterPro" id="IPR014777">
    <property type="entry name" value="4pyrrole_Mease_sub1"/>
</dbReference>
<dbReference type="InterPro" id="IPR014776">
    <property type="entry name" value="4pyrrole_Mease_sub2"/>
</dbReference>
<dbReference type="InterPro" id="IPR006366">
    <property type="entry name" value="CobA/CysG_C"/>
</dbReference>
<dbReference type="InterPro" id="IPR036291">
    <property type="entry name" value="NAD(P)-bd_dom_sf"/>
</dbReference>
<dbReference type="InterPro" id="IPR050161">
    <property type="entry name" value="Siro_Cobalamin_biosynth"/>
</dbReference>
<dbReference type="InterPro" id="IPR037115">
    <property type="entry name" value="Sirohaem_synt_dimer_dom_sf"/>
</dbReference>
<dbReference type="InterPro" id="IPR012409">
    <property type="entry name" value="Sirohaem_synth"/>
</dbReference>
<dbReference type="InterPro" id="IPR028281">
    <property type="entry name" value="Sirohaem_synthase_central"/>
</dbReference>
<dbReference type="InterPro" id="IPR019478">
    <property type="entry name" value="Sirohaem_synthase_dimer_dom"/>
</dbReference>
<dbReference type="InterPro" id="IPR006367">
    <property type="entry name" value="Sirohaem_synthase_N"/>
</dbReference>
<dbReference type="InterPro" id="IPR003043">
    <property type="entry name" value="Uropor_MeTrfase_CS"/>
</dbReference>
<dbReference type="NCBIfam" id="TIGR01469">
    <property type="entry name" value="cobA_cysG_Cterm"/>
    <property type="match status" value="1"/>
</dbReference>
<dbReference type="NCBIfam" id="TIGR01470">
    <property type="entry name" value="cysG_Nterm"/>
    <property type="match status" value="1"/>
</dbReference>
<dbReference type="NCBIfam" id="NF004790">
    <property type="entry name" value="PRK06136.1"/>
    <property type="match status" value="1"/>
</dbReference>
<dbReference type="NCBIfam" id="NF007922">
    <property type="entry name" value="PRK10637.1"/>
    <property type="match status" value="1"/>
</dbReference>
<dbReference type="PANTHER" id="PTHR45790:SF1">
    <property type="entry name" value="SIROHEME SYNTHASE"/>
    <property type="match status" value="1"/>
</dbReference>
<dbReference type="PANTHER" id="PTHR45790">
    <property type="entry name" value="SIROHEME SYNTHASE-RELATED"/>
    <property type="match status" value="1"/>
</dbReference>
<dbReference type="Pfam" id="PF10414">
    <property type="entry name" value="CysG_dimeriser"/>
    <property type="match status" value="1"/>
</dbReference>
<dbReference type="Pfam" id="PF13241">
    <property type="entry name" value="NAD_binding_7"/>
    <property type="match status" value="1"/>
</dbReference>
<dbReference type="Pfam" id="PF14824">
    <property type="entry name" value="Sirohm_synth_M"/>
    <property type="match status" value="1"/>
</dbReference>
<dbReference type="Pfam" id="PF00590">
    <property type="entry name" value="TP_methylase"/>
    <property type="match status" value="1"/>
</dbReference>
<dbReference type="PIRSF" id="PIRSF036426">
    <property type="entry name" value="Sirohaem_synth"/>
    <property type="match status" value="1"/>
</dbReference>
<dbReference type="SUPFAM" id="SSF51735">
    <property type="entry name" value="NAD(P)-binding Rossmann-fold domains"/>
    <property type="match status" value="1"/>
</dbReference>
<dbReference type="SUPFAM" id="SSF75615">
    <property type="entry name" value="Siroheme synthase middle domains-like"/>
    <property type="match status" value="1"/>
</dbReference>
<dbReference type="SUPFAM" id="SSF53790">
    <property type="entry name" value="Tetrapyrrole methylase"/>
    <property type="match status" value="1"/>
</dbReference>
<dbReference type="PROSITE" id="PS00839">
    <property type="entry name" value="SUMT_1"/>
    <property type="match status" value="1"/>
</dbReference>
<dbReference type="PROSITE" id="PS00840">
    <property type="entry name" value="SUMT_2"/>
    <property type="match status" value="1"/>
</dbReference>